<accession>P0CY38</accession>
<accession>C8VB58</accession>
<accession>Q5AXD5</accession>
<protein>
    <recommendedName>
        <fullName>Uncharacterized protein AN12072</fullName>
    </recommendedName>
</protein>
<gene>
    <name type="ORF">AN12072</name>
</gene>
<reference key="1">
    <citation type="journal article" date="2005" name="Nature">
        <title>Sequencing of Aspergillus nidulans and comparative analysis with A. fumigatus and A. oryzae.</title>
        <authorList>
            <person name="Galagan J.E."/>
            <person name="Calvo S.E."/>
            <person name="Cuomo C."/>
            <person name="Ma L.-J."/>
            <person name="Wortman J.R."/>
            <person name="Batzoglou S."/>
            <person name="Lee S.-I."/>
            <person name="Bastuerkmen M."/>
            <person name="Spevak C.C."/>
            <person name="Clutterbuck J."/>
            <person name="Kapitonov V."/>
            <person name="Jurka J."/>
            <person name="Scazzocchio C."/>
            <person name="Farman M.L."/>
            <person name="Butler J."/>
            <person name="Purcell S."/>
            <person name="Harris S."/>
            <person name="Braus G.H."/>
            <person name="Draht O."/>
            <person name="Busch S."/>
            <person name="D'Enfert C."/>
            <person name="Bouchier C."/>
            <person name="Goldman G.H."/>
            <person name="Bell-Pedersen D."/>
            <person name="Griffiths-Jones S."/>
            <person name="Doonan J.H."/>
            <person name="Yu J."/>
            <person name="Vienken K."/>
            <person name="Pain A."/>
            <person name="Freitag M."/>
            <person name="Selker E.U."/>
            <person name="Archer D.B."/>
            <person name="Penalva M.A."/>
            <person name="Oakley B.R."/>
            <person name="Momany M."/>
            <person name="Tanaka T."/>
            <person name="Kumagai T."/>
            <person name="Asai K."/>
            <person name="Machida M."/>
            <person name="Nierman W.C."/>
            <person name="Denning D.W."/>
            <person name="Caddick M.X."/>
            <person name="Hynes M."/>
            <person name="Paoletti M."/>
            <person name="Fischer R."/>
            <person name="Miller B.L."/>
            <person name="Dyer P.S."/>
            <person name="Sachs M.S."/>
            <person name="Osmani S.A."/>
            <person name="Birren B.W."/>
        </authorList>
    </citation>
    <scope>NUCLEOTIDE SEQUENCE [LARGE SCALE GENOMIC DNA]</scope>
    <source>
        <strain>FGSC A4 / ATCC 38163 / CBS 112.46 / NRRL 194 / M139</strain>
    </source>
</reference>
<reference key="2">
    <citation type="journal article" date="2009" name="Fungal Genet. Biol.">
        <title>The 2008 update of the Aspergillus nidulans genome annotation: a community effort.</title>
        <authorList>
            <person name="Wortman J.R."/>
            <person name="Gilsenan J.M."/>
            <person name="Joardar V."/>
            <person name="Deegan J."/>
            <person name="Clutterbuck J."/>
            <person name="Andersen M.R."/>
            <person name="Archer D."/>
            <person name="Bencina M."/>
            <person name="Braus G."/>
            <person name="Coutinho P."/>
            <person name="von Dohren H."/>
            <person name="Doonan J."/>
            <person name="Driessen A.J."/>
            <person name="Durek P."/>
            <person name="Espeso E."/>
            <person name="Fekete E."/>
            <person name="Flipphi M."/>
            <person name="Estrada C.G."/>
            <person name="Geysens S."/>
            <person name="Goldman G."/>
            <person name="de Groot P.W."/>
            <person name="Hansen K."/>
            <person name="Harris S.D."/>
            <person name="Heinekamp T."/>
            <person name="Helmstaedt K."/>
            <person name="Henrissat B."/>
            <person name="Hofmann G."/>
            <person name="Homan T."/>
            <person name="Horio T."/>
            <person name="Horiuchi H."/>
            <person name="James S."/>
            <person name="Jones M."/>
            <person name="Karaffa L."/>
            <person name="Karanyi Z."/>
            <person name="Kato M."/>
            <person name="Keller N."/>
            <person name="Kelly D.E."/>
            <person name="Kiel J.A."/>
            <person name="Kim J.M."/>
            <person name="van der Klei I.J."/>
            <person name="Klis F.M."/>
            <person name="Kovalchuk A."/>
            <person name="Krasevec N."/>
            <person name="Kubicek C.P."/>
            <person name="Liu B."/>
            <person name="Maccabe A."/>
            <person name="Meyer V."/>
            <person name="Mirabito P."/>
            <person name="Miskei M."/>
            <person name="Mos M."/>
            <person name="Mullins J."/>
            <person name="Nelson D.R."/>
            <person name="Nielsen J."/>
            <person name="Oakley B.R."/>
            <person name="Osmani S.A."/>
            <person name="Pakula T."/>
            <person name="Paszewski A."/>
            <person name="Paulsen I."/>
            <person name="Pilsyk S."/>
            <person name="Pocsi I."/>
            <person name="Punt P.J."/>
            <person name="Ram A.F."/>
            <person name="Ren Q."/>
            <person name="Robellet X."/>
            <person name="Robson G."/>
            <person name="Seiboth B."/>
            <person name="van Solingen P."/>
            <person name="Specht T."/>
            <person name="Sun J."/>
            <person name="Taheri-Talesh N."/>
            <person name="Takeshita N."/>
            <person name="Ussery D."/>
            <person name="vanKuyk P.A."/>
            <person name="Visser H."/>
            <person name="van de Vondervoort P.J."/>
            <person name="de Vries R.P."/>
            <person name="Walton J."/>
            <person name="Xiang X."/>
            <person name="Xiong Y."/>
            <person name="Zeng A.P."/>
            <person name="Brandt B.W."/>
            <person name="Cornell M.J."/>
            <person name="van den Hondel C.A."/>
            <person name="Visser J."/>
            <person name="Oliver S.G."/>
            <person name="Turner G."/>
        </authorList>
    </citation>
    <scope>GENOME REANNOTATION</scope>
    <source>
        <strain>FGSC A4 / ATCC 38163 / CBS 112.46 / NRRL 194 / M139</strain>
    </source>
</reference>
<feature type="chain" id="PRO_0000413981" description="Uncharacterized protein AN12072">
    <location>
        <begin position="1"/>
        <end position="623"/>
    </location>
</feature>
<feature type="region of interest" description="Disordered" evidence="1">
    <location>
        <begin position="1"/>
        <end position="107"/>
    </location>
</feature>
<feature type="region of interest" description="Disordered" evidence="1">
    <location>
        <begin position="132"/>
        <end position="181"/>
    </location>
</feature>
<feature type="region of interest" description="Disordered" evidence="1">
    <location>
        <begin position="207"/>
        <end position="231"/>
    </location>
</feature>
<feature type="region of interest" description="Disordered" evidence="1">
    <location>
        <begin position="298"/>
        <end position="349"/>
    </location>
</feature>
<feature type="region of interest" description="Disordered" evidence="1">
    <location>
        <begin position="384"/>
        <end position="464"/>
    </location>
</feature>
<feature type="region of interest" description="Disordered" evidence="1">
    <location>
        <begin position="533"/>
        <end position="553"/>
    </location>
</feature>
<feature type="region of interest" description="Disordered" evidence="1">
    <location>
        <begin position="568"/>
        <end position="623"/>
    </location>
</feature>
<feature type="compositionally biased region" description="Polar residues" evidence="1">
    <location>
        <begin position="1"/>
        <end position="18"/>
    </location>
</feature>
<feature type="compositionally biased region" description="Basic and acidic residues" evidence="1">
    <location>
        <begin position="25"/>
        <end position="34"/>
    </location>
</feature>
<feature type="compositionally biased region" description="Low complexity" evidence="1">
    <location>
        <begin position="39"/>
        <end position="49"/>
    </location>
</feature>
<feature type="compositionally biased region" description="Polar residues" evidence="1">
    <location>
        <begin position="132"/>
        <end position="144"/>
    </location>
</feature>
<feature type="compositionally biased region" description="Low complexity" evidence="1">
    <location>
        <begin position="165"/>
        <end position="177"/>
    </location>
</feature>
<feature type="compositionally biased region" description="Polar residues" evidence="1">
    <location>
        <begin position="328"/>
        <end position="339"/>
    </location>
</feature>
<feature type="compositionally biased region" description="Low complexity" evidence="1">
    <location>
        <begin position="400"/>
        <end position="417"/>
    </location>
</feature>
<feature type="compositionally biased region" description="Polar residues" evidence="1">
    <location>
        <begin position="533"/>
        <end position="548"/>
    </location>
</feature>
<feature type="compositionally biased region" description="Low complexity" evidence="1">
    <location>
        <begin position="604"/>
        <end position="614"/>
    </location>
</feature>
<organism>
    <name type="scientific">Emericella nidulans (strain FGSC A4 / ATCC 38163 / CBS 112.46 / NRRL 194 / M139)</name>
    <name type="common">Aspergillus nidulans</name>
    <dbReference type="NCBI Taxonomy" id="227321"/>
    <lineage>
        <taxon>Eukaryota</taxon>
        <taxon>Fungi</taxon>
        <taxon>Dikarya</taxon>
        <taxon>Ascomycota</taxon>
        <taxon>Pezizomycotina</taxon>
        <taxon>Eurotiomycetes</taxon>
        <taxon>Eurotiomycetidae</taxon>
        <taxon>Eurotiales</taxon>
        <taxon>Aspergillaceae</taxon>
        <taxon>Aspergillus</taxon>
        <taxon>Aspergillus subgen. Nidulantes</taxon>
    </lineage>
</organism>
<sequence length="623" mass="67043">MSSRSGSADTFTQRSDSNLRPRRLISLDDVRDNNGRQPSSSGISTTGSSELPTLRSRGATPSPRPSRNVSPIPMGHPSRATQPRSDARPGNSLGGFTPNGKYQDPFTESSRAAVDFLDASWSSLQGIASSLLGSDTARPTSNGGPRSHARKPSRPDYLAKHRAVSTSTWGPSGPTTPEIGAGTQDERQAMVHAKKMEALLLADTDPSWNLNSRHKRRDSNDRTVQSRADTDQDEEALVYVHQVQPTDTITGVTIRYGCQAAIFRKVNGFWPSDSIQARKTVLLPVDCCSIKGRPVKAREETDLLQDVPSRPSIEDPSGSSIVPAPSPEKSTFSRISEQPGTEPEAESDQIWKHESWVQIDGFAEPVEIGRVPRRALGFFPRTRRKSVSYSDSEPVRGRLQTPTISTASSPIQPSSSPNADQHDSYHAGSPASRGPGSKPKGRHRRRPSGLELSGTGVGTLDRNVNLPGPAMDGLSKFFAQHLPTLAPKQAPPNFDSLSGNSSTVASINSTSLDSIGGAVEGWVRKITARAKSSINDLQQGTSSSQNQAMPPETRRRGFSDLIELEDGVESRNSSGLLAGTGWKPDLTRSGSGYVNGANLRERFPSASPSTSRTRTGLDRTKGD</sequence>
<evidence type="ECO:0000256" key="1">
    <source>
        <dbReference type="SAM" id="MobiDB-lite"/>
    </source>
</evidence>
<evidence type="ECO:0000305" key="2"/>
<comment type="sequence caution" evidence="2">
    <conflict type="erroneous gene model prediction">
        <sequence resource="EMBL-CDS" id="CBF79193"/>
    </conflict>
    <text>The predicted gene AN7045 has been split into 2 genes: AN12071 and AN12072.</text>
</comment>
<comment type="sequence caution" evidence="2">
    <conflict type="erroneous gene model prediction">
        <sequence resource="EMBL-CDS" id="EAA61691"/>
    </conflict>
    <text>The predicted gene AN7045 has been split into 2 genes: AN12071 and AN12072.</text>
</comment>
<dbReference type="EMBL" id="AACD01000117">
    <property type="protein sequence ID" value="EAA61691.1"/>
    <property type="status" value="ALT_SEQ"/>
    <property type="molecule type" value="Genomic_DNA"/>
</dbReference>
<dbReference type="EMBL" id="BN001304">
    <property type="protein sequence ID" value="CBF79193.1"/>
    <property type="status" value="ALT_SEQ"/>
    <property type="molecule type" value="Genomic_DNA"/>
</dbReference>
<dbReference type="RefSeq" id="XP_664649.1">
    <property type="nucleotide sequence ID" value="XM_659557.1"/>
</dbReference>
<dbReference type="KEGG" id="ani:ANIA_07045"/>
<dbReference type="eggNOG" id="KOG0544">
    <property type="taxonomic scope" value="Eukaryota"/>
</dbReference>
<dbReference type="HOGENOM" id="CLU_015384_1_0_1"/>
<dbReference type="InParanoid" id="P0CY38"/>
<dbReference type="OrthoDB" id="2192830at2759"/>
<dbReference type="Proteomes" id="UP000000560">
    <property type="component" value="Chromosome IV"/>
</dbReference>
<dbReference type="Gene3D" id="3.10.350.10">
    <property type="entry name" value="LysM domain"/>
    <property type="match status" value="1"/>
</dbReference>
<dbReference type="InterPro" id="IPR045030">
    <property type="entry name" value="LYSM1-4"/>
</dbReference>
<dbReference type="InterPro" id="IPR036779">
    <property type="entry name" value="LysM_dom_sf"/>
</dbReference>
<dbReference type="PANTHER" id="PTHR20932:SF8">
    <property type="entry name" value="LD22649P"/>
    <property type="match status" value="1"/>
</dbReference>
<dbReference type="PANTHER" id="PTHR20932">
    <property type="entry name" value="LYSM AND PUTATIVE PEPTIDOGLYCAN-BINDING DOMAIN-CONTAINING PROTEIN"/>
    <property type="match status" value="1"/>
</dbReference>
<keyword id="KW-1185">Reference proteome</keyword>
<proteinExistence type="predicted"/>
<name>Y2072_EMENI</name>